<sequence>MSTYAIIKTGGKQVKVEVGQAIYVEKIDAEAGAEVTFNEVVLVGGDKTVVGTPVVEGATVVGTVEKQGKQKKVVTFKYKPKKGSHRKQGHRQPYTKVVINAINA</sequence>
<proteinExistence type="inferred from homology"/>
<name>RL21_STRPG</name>
<protein>
    <recommendedName>
        <fullName evidence="1">Large ribosomal subunit protein bL21</fullName>
    </recommendedName>
    <alternativeName>
        <fullName evidence="2">50S ribosomal protein L21</fullName>
    </alternativeName>
</protein>
<dbReference type="EMBL" id="AM295007">
    <property type="protein sequence ID" value="CAM30499.1"/>
    <property type="molecule type" value="Genomic_DNA"/>
</dbReference>
<dbReference type="RefSeq" id="WP_002985116.1">
    <property type="nucleotide sequence ID" value="NC_009332.1"/>
</dbReference>
<dbReference type="SMR" id="A2RF70"/>
<dbReference type="GeneID" id="83690429"/>
<dbReference type="KEGG" id="spf:SpyM51174"/>
<dbReference type="HOGENOM" id="CLU_061463_3_1_9"/>
<dbReference type="GO" id="GO:0005737">
    <property type="term" value="C:cytoplasm"/>
    <property type="evidence" value="ECO:0007669"/>
    <property type="project" value="UniProtKB-ARBA"/>
</dbReference>
<dbReference type="GO" id="GO:1990904">
    <property type="term" value="C:ribonucleoprotein complex"/>
    <property type="evidence" value="ECO:0007669"/>
    <property type="project" value="UniProtKB-KW"/>
</dbReference>
<dbReference type="GO" id="GO:0005840">
    <property type="term" value="C:ribosome"/>
    <property type="evidence" value="ECO:0007669"/>
    <property type="project" value="UniProtKB-KW"/>
</dbReference>
<dbReference type="GO" id="GO:0019843">
    <property type="term" value="F:rRNA binding"/>
    <property type="evidence" value="ECO:0007669"/>
    <property type="project" value="UniProtKB-UniRule"/>
</dbReference>
<dbReference type="GO" id="GO:0003735">
    <property type="term" value="F:structural constituent of ribosome"/>
    <property type="evidence" value="ECO:0007669"/>
    <property type="project" value="InterPro"/>
</dbReference>
<dbReference type="GO" id="GO:0006412">
    <property type="term" value="P:translation"/>
    <property type="evidence" value="ECO:0007669"/>
    <property type="project" value="UniProtKB-UniRule"/>
</dbReference>
<dbReference type="HAMAP" id="MF_01363">
    <property type="entry name" value="Ribosomal_bL21"/>
    <property type="match status" value="1"/>
</dbReference>
<dbReference type="InterPro" id="IPR028909">
    <property type="entry name" value="bL21-like"/>
</dbReference>
<dbReference type="InterPro" id="IPR036164">
    <property type="entry name" value="bL21-like_sf"/>
</dbReference>
<dbReference type="InterPro" id="IPR001787">
    <property type="entry name" value="Ribosomal_bL21"/>
</dbReference>
<dbReference type="InterPro" id="IPR018258">
    <property type="entry name" value="Ribosomal_bL21_CS"/>
</dbReference>
<dbReference type="NCBIfam" id="TIGR00061">
    <property type="entry name" value="L21"/>
    <property type="match status" value="1"/>
</dbReference>
<dbReference type="PANTHER" id="PTHR21349">
    <property type="entry name" value="50S RIBOSOMAL PROTEIN L21"/>
    <property type="match status" value="1"/>
</dbReference>
<dbReference type="PANTHER" id="PTHR21349:SF0">
    <property type="entry name" value="LARGE RIBOSOMAL SUBUNIT PROTEIN BL21M"/>
    <property type="match status" value="1"/>
</dbReference>
<dbReference type="Pfam" id="PF00829">
    <property type="entry name" value="Ribosomal_L21p"/>
    <property type="match status" value="1"/>
</dbReference>
<dbReference type="SUPFAM" id="SSF141091">
    <property type="entry name" value="L21p-like"/>
    <property type="match status" value="1"/>
</dbReference>
<dbReference type="PROSITE" id="PS01169">
    <property type="entry name" value="RIBOSOMAL_L21"/>
    <property type="match status" value="1"/>
</dbReference>
<keyword id="KW-0687">Ribonucleoprotein</keyword>
<keyword id="KW-0689">Ribosomal protein</keyword>
<keyword id="KW-0694">RNA-binding</keyword>
<keyword id="KW-0699">rRNA-binding</keyword>
<gene>
    <name evidence="1" type="primary">rplU</name>
    <name type="ordered locus">SpyM51174</name>
</gene>
<evidence type="ECO:0000255" key="1">
    <source>
        <dbReference type="HAMAP-Rule" id="MF_01363"/>
    </source>
</evidence>
<evidence type="ECO:0000305" key="2"/>
<comment type="function">
    <text evidence="1">This protein binds to 23S rRNA in the presence of protein L20.</text>
</comment>
<comment type="subunit">
    <text evidence="1">Part of the 50S ribosomal subunit. Contacts protein L20.</text>
</comment>
<comment type="similarity">
    <text evidence="1">Belongs to the bacterial ribosomal protein bL21 family.</text>
</comment>
<feature type="chain" id="PRO_1000067906" description="Large ribosomal subunit protein bL21">
    <location>
        <begin position="1"/>
        <end position="104"/>
    </location>
</feature>
<organism>
    <name type="scientific">Streptococcus pyogenes serotype M5 (strain Manfredo)</name>
    <dbReference type="NCBI Taxonomy" id="160491"/>
    <lineage>
        <taxon>Bacteria</taxon>
        <taxon>Bacillati</taxon>
        <taxon>Bacillota</taxon>
        <taxon>Bacilli</taxon>
        <taxon>Lactobacillales</taxon>
        <taxon>Streptococcaceae</taxon>
        <taxon>Streptococcus</taxon>
    </lineage>
</organism>
<accession>A2RF70</accession>
<reference key="1">
    <citation type="journal article" date="2007" name="J. Bacteriol.">
        <title>Complete genome of acute rheumatic fever-associated serotype M5 Streptococcus pyogenes strain Manfredo.</title>
        <authorList>
            <person name="Holden M.T.G."/>
            <person name="Scott A."/>
            <person name="Cherevach I."/>
            <person name="Chillingworth T."/>
            <person name="Churcher C."/>
            <person name="Cronin A."/>
            <person name="Dowd L."/>
            <person name="Feltwell T."/>
            <person name="Hamlin N."/>
            <person name="Holroyd S."/>
            <person name="Jagels K."/>
            <person name="Moule S."/>
            <person name="Mungall K."/>
            <person name="Quail M.A."/>
            <person name="Price C."/>
            <person name="Rabbinowitsch E."/>
            <person name="Sharp S."/>
            <person name="Skelton J."/>
            <person name="Whitehead S."/>
            <person name="Barrell B.G."/>
            <person name="Kehoe M."/>
            <person name="Parkhill J."/>
        </authorList>
    </citation>
    <scope>NUCLEOTIDE SEQUENCE [LARGE SCALE GENOMIC DNA]</scope>
    <source>
        <strain>Manfredo</strain>
    </source>
</reference>